<sequence>MSIPNNLRYSEEHEWVKTEGNEVVIGITHFAQNELGDIVFVELPEVGATIEADEPFGSVESVKTVSELYAPVSGKVVAVNEELSDQPELVNESPYEGAWMVKVELSDASQVEKLLTAEKYAEMTNQD</sequence>
<dbReference type="EMBL" id="CP001598">
    <property type="protein sequence ID" value="ACQ45997.1"/>
    <property type="molecule type" value="Genomic_DNA"/>
</dbReference>
<dbReference type="RefSeq" id="WP_000026899.1">
    <property type="nucleotide sequence ID" value="NC_012659.1"/>
</dbReference>
<dbReference type="SMR" id="C3PDM2"/>
<dbReference type="GeneID" id="45024848"/>
<dbReference type="KEGG" id="bai:BAA_5263"/>
<dbReference type="HOGENOM" id="CLU_097408_2_2_9"/>
<dbReference type="GO" id="GO:0005829">
    <property type="term" value="C:cytosol"/>
    <property type="evidence" value="ECO:0007669"/>
    <property type="project" value="TreeGrafter"/>
</dbReference>
<dbReference type="GO" id="GO:0005960">
    <property type="term" value="C:glycine cleavage complex"/>
    <property type="evidence" value="ECO:0007669"/>
    <property type="project" value="InterPro"/>
</dbReference>
<dbReference type="GO" id="GO:0019464">
    <property type="term" value="P:glycine decarboxylation via glycine cleavage system"/>
    <property type="evidence" value="ECO:0007669"/>
    <property type="project" value="UniProtKB-UniRule"/>
</dbReference>
<dbReference type="CDD" id="cd06848">
    <property type="entry name" value="GCS_H"/>
    <property type="match status" value="1"/>
</dbReference>
<dbReference type="Gene3D" id="2.40.50.100">
    <property type="match status" value="1"/>
</dbReference>
<dbReference type="HAMAP" id="MF_00272">
    <property type="entry name" value="GcvH"/>
    <property type="match status" value="1"/>
</dbReference>
<dbReference type="InterPro" id="IPR003016">
    <property type="entry name" value="2-oxoA_DH_lipoyl-BS"/>
</dbReference>
<dbReference type="InterPro" id="IPR000089">
    <property type="entry name" value="Biotin_lipoyl"/>
</dbReference>
<dbReference type="InterPro" id="IPR002930">
    <property type="entry name" value="GCV_H"/>
</dbReference>
<dbReference type="InterPro" id="IPR033753">
    <property type="entry name" value="GCV_H/Fam206"/>
</dbReference>
<dbReference type="InterPro" id="IPR017453">
    <property type="entry name" value="GCV_H_sub"/>
</dbReference>
<dbReference type="InterPro" id="IPR011053">
    <property type="entry name" value="Single_hybrid_motif"/>
</dbReference>
<dbReference type="NCBIfam" id="TIGR00527">
    <property type="entry name" value="gcvH"/>
    <property type="match status" value="1"/>
</dbReference>
<dbReference type="NCBIfam" id="NF002270">
    <property type="entry name" value="PRK01202.1"/>
    <property type="match status" value="1"/>
</dbReference>
<dbReference type="PANTHER" id="PTHR11715">
    <property type="entry name" value="GLYCINE CLEAVAGE SYSTEM H PROTEIN"/>
    <property type="match status" value="1"/>
</dbReference>
<dbReference type="PANTHER" id="PTHR11715:SF3">
    <property type="entry name" value="GLYCINE CLEAVAGE SYSTEM H PROTEIN-RELATED"/>
    <property type="match status" value="1"/>
</dbReference>
<dbReference type="Pfam" id="PF01597">
    <property type="entry name" value="GCV_H"/>
    <property type="match status" value="1"/>
</dbReference>
<dbReference type="SUPFAM" id="SSF51230">
    <property type="entry name" value="Single hybrid motif"/>
    <property type="match status" value="1"/>
</dbReference>
<dbReference type="PROSITE" id="PS50968">
    <property type="entry name" value="BIOTINYL_LIPOYL"/>
    <property type="match status" value="1"/>
</dbReference>
<dbReference type="PROSITE" id="PS00189">
    <property type="entry name" value="LIPOYL"/>
    <property type="match status" value="1"/>
</dbReference>
<comment type="function">
    <text evidence="1">The glycine cleavage system catalyzes the degradation of glycine. The H protein shuttles the methylamine group of glycine from the P protein to the T protein.</text>
</comment>
<comment type="function">
    <text evidence="1">Is also involved in protein lipoylation via its role as an octanoyl/lipoyl carrier protein intermediate.</text>
</comment>
<comment type="cofactor">
    <cofactor evidence="1">
        <name>(R)-lipoate</name>
        <dbReference type="ChEBI" id="CHEBI:83088"/>
    </cofactor>
    <text evidence="1">Binds 1 lipoyl cofactor covalently.</text>
</comment>
<comment type="subunit">
    <text evidence="1">The glycine cleavage system is composed of four proteins: P, T, L and H.</text>
</comment>
<comment type="similarity">
    <text evidence="1">Belongs to the GcvH family.</text>
</comment>
<evidence type="ECO:0000255" key="1">
    <source>
        <dbReference type="HAMAP-Rule" id="MF_00272"/>
    </source>
</evidence>
<evidence type="ECO:0000255" key="2">
    <source>
        <dbReference type="PROSITE-ProRule" id="PRU01066"/>
    </source>
</evidence>
<organism>
    <name type="scientific">Bacillus anthracis (strain A0248)</name>
    <dbReference type="NCBI Taxonomy" id="592021"/>
    <lineage>
        <taxon>Bacteria</taxon>
        <taxon>Bacillati</taxon>
        <taxon>Bacillota</taxon>
        <taxon>Bacilli</taxon>
        <taxon>Bacillales</taxon>
        <taxon>Bacillaceae</taxon>
        <taxon>Bacillus</taxon>
        <taxon>Bacillus cereus group</taxon>
    </lineage>
</organism>
<reference key="1">
    <citation type="submission" date="2009-04" db="EMBL/GenBank/DDBJ databases">
        <title>Genome sequence of Bacillus anthracis A0248.</title>
        <authorList>
            <person name="Dodson R.J."/>
            <person name="Munk A.C."/>
            <person name="Bruce D."/>
            <person name="Detter C."/>
            <person name="Tapia R."/>
            <person name="Sutton G."/>
            <person name="Sims D."/>
            <person name="Brettin T."/>
        </authorList>
    </citation>
    <scope>NUCLEOTIDE SEQUENCE [LARGE SCALE GENOMIC DNA]</scope>
    <source>
        <strain>A0248</strain>
    </source>
</reference>
<feature type="chain" id="PRO_1000190189" description="Glycine cleavage system H protein">
    <location>
        <begin position="1"/>
        <end position="127"/>
    </location>
</feature>
<feature type="domain" description="Lipoyl-binding" evidence="2">
    <location>
        <begin position="22"/>
        <end position="104"/>
    </location>
</feature>
<feature type="modified residue" description="N6-lipoyllysine" evidence="1">
    <location>
        <position position="63"/>
    </location>
</feature>
<protein>
    <recommendedName>
        <fullName evidence="1">Glycine cleavage system H protein</fullName>
    </recommendedName>
    <alternativeName>
        <fullName evidence="1">Octanoyl/lipoyl carrier protein</fullName>
    </alternativeName>
</protein>
<name>GCSH_BACAA</name>
<gene>
    <name evidence="1" type="primary">gcvH</name>
    <name type="ordered locus">BAA_5263</name>
</gene>
<proteinExistence type="inferred from homology"/>
<accession>C3PDM2</accession>
<keyword id="KW-0450">Lipoyl</keyword>